<proteinExistence type="inferred from homology"/>
<evidence type="ECO:0000255" key="1">
    <source>
        <dbReference type="HAMAP-Rule" id="MF_00129"/>
    </source>
</evidence>
<reference key="1">
    <citation type="journal article" date="2010" name="Genome Biol.">
        <title>Structure and dynamics of the pan-genome of Streptococcus pneumoniae and closely related species.</title>
        <authorList>
            <person name="Donati C."/>
            <person name="Hiller N.L."/>
            <person name="Tettelin H."/>
            <person name="Muzzi A."/>
            <person name="Croucher N.J."/>
            <person name="Angiuoli S.V."/>
            <person name="Oggioni M."/>
            <person name="Dunning Hotopp J.C."/>
            <person name="Hu F.Z."/>
            <person name="Riley D.R."/>
            <person name="Covacci A."/>
            <person name="Mitchell T.J."/>
            <person name="Bentley S.D."/>
            <person name="Kilian M."/>
            <person name="Ehrlich G.D."/>
            <person name="Rappuoli R."/>
            <person name="Moxon E.R."/>
            <person name="Masignani V."/>
        </authorList>
    </citation>
    <scope>NUCLEOTIDE SEQUENCE [LARGE SCALE GENOMIC DNA]</scope>
    <source>
        <strain>Hungary19A-6</strain>
    </source>
</reference>
<protein>
    <recommendedName>
        <fullName evidence="1">tRNA uridine 5-carboxymethylaminomethyl modification enzyme MnmG</fullName>
    </recommendedName>
    <alternativeName>
        <fullName evidence="1">Glucose-inhibited division protein A</fullName>
    </alternativeName>
</protein>
<organism>
    <name type="scientific">Streptococcus pneumoniae (strain Hungary19A-6)</name>
    <dbReference type="NCBI Taxonomy" id="487214"/>
    <lineage>
        <taxon>Bacteria</taxon>
        <taxon>Bacillati</taxon>
        <taxon>Bacillota</taxon>
        <taxon>Bacilli</taxon>
        <taxon>Lactobacillales</taxon>
        <taxon>Streptococcaceae</taxon>
        <taxon>Streptococcus</taxon>
    </lineage>
</organism>
<name>MNMG_STRPI</name>
<dbReference type="EMBL" id="CP000936">
    <property type="protein sequence ID" value="ACA36543.1"/>
    <property type="molecule type" value="Genomic_DNA"/>
</dbReference>
<dbReference type="RefSeq" id="WP_000639152.1">
    <property type="nucleotide sequence ID" value="NC_010380.1"/>
</dbReference>
<dbReference type="SMR" id="B1I835"/>
<dbReference type="KEGG" id="spv:SPH_0236"/>
<dbReference type="HOGENOM" id="CLU_007831_2_2_9"/>
<dbReference type="Proteomes" id="UP000002163">
    <property type="component" value="Chromosome"/>
</dbReference>
<dbReference type="GO" id="GO:0005829">
    <property type="term" value="C:cytosol"/>
    <property type="evidence" value="ECO:0007669"/>
    <property type="project" value="TreeGrafter"/>
</dbReference>
<dbReference type="GO" id="GO:0050660">
    <property type="term" value="F:flavin adenine dinucleotide binding"/>
    <property type="evidence" value="ECO:0007669"/>
    <property type="project" value="UniProtKB-UniRule"/>
</dbReference>
<dbReference type="GO" id="GO:0030488">
    <property type="term" value="P:tRNA methylation"/>
    <property type="evidence" value="ECO:0007669"/>
    <property type="project" value="TreeGrafter"/>
</dbReference>
<dbReference type="GO" id="GO:0002098">
    <property type="term" value="P:tRNA wobble uridine modification"/>
    <property type="evidence" value="ECO:0007669"/>
    <property type="project" value="InterPro"/>
</dbReference>
<dbReference type="FunFam" id="1.10.10.1800:FF:000001">
    <property type="entry name" value="tRNA uridine 5-carboxymethylaminomethyl modification enzyme MnmG"/>
    <property type="match status" value="1"/>
</dbReference>
<dbReference type="FunFam" id="1.10.150.570:FF:000001">
    <property type="entry name" value="tRNA uridine 5-carboxymethylaminomethyl modification enzyme MnmG"/>
    <property type="match status" value="1"/>
</dbReference>
<dbReference type="FunFam" id="3.50.50.60:FF:000002">
    <property type="entry name" value="tRNA uridine 5-carboxymethylaminomethyl modification enzyme MnmG"/>
    <property type="match status" value="1"/>
</dbReference>
<dbReference type="FunFam" id="3.50.50.60:FF:000063">
    <property type="entry name" value="tRNA uridine 5-carboxymethylaminomethyl modification enzyme MnmG"/>
    <property type="match status" value="1"/>
</dbReference>
<dbReference type="Gene3D" id="3.50.50.60">
    <property type="entry name" value="FAD/NAD(P)-binding domain"/>
    <property type="match status" value="2"/>
</dbReference>
<dbReference type="Gene3D" id="1.10.150.570">
    <property type="entry name" value="GidA associated domain, C-terminal subdomain"/>
    <property type="match status" value="1"/>
</dbReference>
<dbReference type="Gene3D" id="1.10.10.1800">
    <property type="entry name" value="tRNA uridine 5-carboxymethylaminomethyl modification enzyme MnmG/GidA"/>
    <property type="match status" value="1"/>
</dbReference>
<dbReference type="HAMAP" id="MF_00129">
    <property type="entry name" value="MnmG_GidA"/>
    <property type="match status" value="1"/>
</dbReference>
<dbReference type="InterPro" id="IPR036188">
    <property type="entry name" value="FAD/NAD-bd_sf"/>
</dbReference>
<dbReference type="InterPro" id="IPR049312">
    <property type="entry name" value="GIDA_C_N"/>
</dbReference>
<dbReference type="InterPro" id="IPR004416">
    <property type="entry name" value="MnmG"/>
</dbReference>
<dbReference type="InterPro" id="IPR002218">
    <property type="entry name" value="MnmG-rel"/>
</dbReference>
<dbReference type="InterPro" id="IPR020595">
    <property type="entry name" value="MnmG-rel_CS"/>
</dbReference>
<dbReference type="InterPro" id="IPR026904">
    <property type="entry name" value="MnmG_C"/>
</dbReference>
<dbReference type="InterPro" id="IPR047001">
    <property type="entry name" value="MnmG_C_subdom"/>
</dbReference>
<dbReference type="InterPro" id="IPR044920">
    <property type="entry name" value="MnmG_C_subdom_sf"/>
</dbReference>
<dbReference type="InterPro" id="IPR040131">
    <property type="entry name" value="MnmG_N"/>
</dbReference>
<dbReference type="NCBIfam" id="TIGR00136">
    <property type="entry name" value="mnmG_gidA"/>
    <property type="match status" value="1"/>
</dbReference>
<dbReference type="PANTHER" id="PTHR11806">
    <property type="entry name" value="GLUCOSE INHIBITED DIVISION PROTEIN A"/>
    <property type="match status" value="1"/>
</dbReference>
<dbReference type="PANTHER" id="PTHR11806:SF0">
    <property type="entry name" value="PROTEIN MTO1 HOMOLOG, MITOCHONDRIAL"/>
    <property type="match status" value="1"/>
</dbReference>
<dbReference type="Pfam" id="PF01134">
    <property type="entry name" value="GIDA"/>
    <property type="match status" value="1"/>
</dbReference>
<dbReference type="Pfam" id="PF21680">
    <property type="entry name" value="GIDA_C_1st"/>
    <property type="match status" value="1"/>
</dbReference>
<dbReference type="Pfam" id="PF13932">
    <property type="entry name" value="SAM_GIDA_C"/>
    <property type="match status" value="1"/>
</dbReference>
<dbReference type="PRINTS" id="PR00411">
    <property type="entry name" value="PNDRDTASEI"/>
</dbReference>
<dbReference type="SMART" id="SM01228">
    <property type="entry name" value="GIDA_assoc_3"/>
    <property type="match status" value="1"/>
</dbReference>
<dbReference type="SUPFAM" id="SSF51905">
    <property type="entry name" value="FAD/NAD(P)-binding domain"/>
    <property type="match status" value="1"/>
</dbReference>
<dbReference type="PROSITE" id="PS01280">
    <property type="entry name" value="GIDA_1"/>
    <property type="match status" value="1"/>
</dbReference>
<dbReference type="PROSITE" id="PS01281">
    <property type="entry name" value="GIDA_2"/>
    <property type="match status" value="1"/>
</dbReference>
<keyword id="KW-0963">Cytoplasm</keyword>
<keyword id="KW-0274">FAD</keyword>
<keyword id="KW-0285">Flavoprotein</keyword>
<keyword id="KW-0520">NAD</keyword>
<keyword id="KW-0819">tRNA processing</keyword>
<sequence>MIYHFTEEYDIIVIGAGHAGVEASLAASRMGCKVLLATINIEMLAFMPCNPSIGGSAKGIVVREVDALGGEMAKTIDKTYIQMKMLNTGKGPAVRALRAQADKELYSKEMRKTVENQENLTLRQTMIDEILVEDGKVVGVRTATHQEYAAKAVIVTTGTALRGEIIIGDLKYSSGPNHSLASINLADNLKELGLEIGRFKTGTPPRVKASSINYDVTEIQPGDEAPNHFSYTSRDEDYVKDQVPCWLTYTNGTSHEIIQNNLHRAPMFTGVVKGVGPRYCPSIEDKIVRFADKERHQLFLEPEGRNTEEVYVQGLSTSLPEDVQRDLVHSIKGLENAEMMRTGYAIEYDMVLPHQLRATLETKKISGLFTAGQTNGTSGYEEAAGQGIIAGINAALKIQGKPELILKRSDGYIGVMIDDLVTKGTIEPYRLLTSRAEYRLILRHDNADMRLTEMGREIGLVDDERWTRFEIKKNQFDNEMKRLDSIKLKPVKETNAKVEEMGFKPLTDAVTAKEFLRRPEVSYQDVVAFIGPAAEDLDDKIIELIETEIKYEGYISKAMDQVAKMKRMEEKRIPANIDWDDIDSIATEARQKFKLINPETIGQASRISGVNPADISILMVYLEGKNRSISKTLQKSK</sequence>
<comment type="function">
    <text evidence="1">NAD-binding protein involved in the addition of a carboxymethylaminomethyl (cmnm) group at the wobble position (U34) of certain tRNAs, forming tRNA-cmnm(5)s(2)U34.</text>
</comment>
<comment type="cofactor">
    <cofactor evidence="1">
        <name>FAD</name>
        <dbReference type="ChEBI" id="CHEBI:57692"/>
    </cofactor>
</comment>
<comment type="subunit">
    <text evidence="1">Homodimer. Heterotetramer of two MnmE and two MnmG subunits.</text>
</comment>
<comment type="subcellular location">
    <subcellularLocation>
        <location evidence="1">Cytoplasm</location>
    </subcellularLocation>
</comment>
<comment type="similarity">
    <text evidence="1">Belongs to the MnmG family.</text>
</comment>
<accession>B1I835</accession>
<gene>
    <name evidence="1" type="primary">mnmG</name>
    <name evidence="1" type="synonym">gidA</name>
    <name type="ordered locus">SPH_0236</name>
</gene>
<feature type="chain" id="PRO_0000345340" description="tRNA uridine 5-carboxymethylaminomethyl modification enzyme MnmG">
    <location>
        <begin position="1"/>
        <end position="637"/>
    </location>
</feature>
<feature type="binding site" evidence="1">
    <location>
        <begin position="15"/>
        <end position="20"/>
    </location>
    <ligand>
        <name>FAD</name>
        <dbReference type="ChEBI" id="CHEBI:57692"/>
    </ligand>
</feature>
<feature type="binding site" evidence="1">
    <location>
        <position position="127"/>
    </location>
    <ligand>
        <name>FAD</name>
        <dbReference type="ChEBI" id="CHEBI:57692"/>
    </ligand>
</feature>
<feature type="binding site" evidence="1">
    <location>
        <position position="182"/>
    </location>
    <ligand>
        <name>FAD</name>
        <dbReference type="ChEBI" id="CHEBI:57692"/>
    </ligand>
</feature>
<feature type="binding site" evidence="1">
    <location>
        <begin position="276"/>
        <end position="290"/>
    </location>
    <ligand>
        <name>NAD(+)</name>
        <dbReference type="ChEBI" id="CHEBI:57540"/>
    </ligand>
</feature>
<feature type="binding site" evidence="1">
    <location>
        <position position="373"/>
    </location>
    <ligand>
        <name>FAD</name>
        <dbReference type="ChEBI" id="CHEBI:57692"/>
    </ligand>
</feature>